<accession>Q45774</accession>
<reference key="1">
    <citation type="submission" date="1994-11" db="EMBL/GenBank/DDBJ databases">
        <title>Cloning of novel Bacillus thuringiensis delta-endotoxin.</title>
        <authorList>
            <person name="Bishop A.H."/>
            <person name="Bone E.J."/>
            <person name="Ellar D.J."/>
        </authorList>
    </citation>
    <scope>NUCLEOTIDE SEQUENCE [GENOMIC DNA]</scope>
</reference>
<protein>
    <recommendedName>
        <fullName>Pesticidal crystal protein Cry1Bc</fullName>
    </recommendedName>
    <alternativeName>
        <fullName>140 kDa crystal protein</fullName>
    </alternativeName>
    <alternativeName>
        <fullName>Crystaline entomocidal protoxin</fullName>
    </alternativeName>
    <alternativeName>
        <fullName>Insecticidal delta-endotoxin CryIB(c)</fullName>
    </alternativeName>
</protein>
<dbReference type="EMBL" id="Z46442">
    <property type="protein sequence ID" value="CAA86568.1"/>
    <property type="molecule type" value="Genomic_DNA"/>
</dbReference>
<dbReference type="SMR" id="Q45774"/>
<dbReference type="GO" id="GO:0005102">
    <property type="term" value="F:signaling receptor binding"/>
    <property type="evidence" value="ECO:0007669"/>
    <property type="project" value="InterPro"/>
</dbReference>
<dbReference type="GO" id="GO:0090729">
    <property type="term" value="F:toxin activity"/>
    <property type="evidence" value="ECO:0007669"/>
    <property type="project" value="UniProtKB-KW"/>
</dbReference>
<dbReference type="GO" id="GO:0030435">
    <property type="term" value="P:sporulation resulting in formation of a cellular spore"/>
    <property type="evidence" value="ECO:0007669"/>
    <property type="project" value="UniProtKB-KW"/>
</dbReference>
<dbReference type="GO" id="GO:0001907">
    <property type="term" value="P:symbiont-mediated killing of host cell"/>
    <property type="evidence" value="ECO:0007669"/>
    <property type="project" value="InterPro"/>
</dbReference>
<dbReference type="CDD" id="cd04085">
    <property type="entry name" value="delta_endotoxin_C"/>
    <property type="match status" value="1"/>
</dbReference>
<dbReference type="Gene3D" id="2.60.120.260">
    <property type="entry name" value="Galactose-binding domain-like"/>
    <property type="match status" value="1"/>
</dbReference>
<dbReference type="Gene3D" id="2.100.10.10">
    <property type="entry name" value="Pesticidal crystal protein, central domain"/>
    <property type="match status" value="1"/>
</dbReference>
<dbReference type="Gene3D" id="1.20.190.10">
    <property type="entry name" value="Pesticidal crystal protein, N-terminal domain"/>
    <property type="match status" value="1"/>
</dbReference>
<dbReference type="InterPro" id="IPR048645">
    <property type="entry name" value="Cry1Ac-like_dom-VII"/>
</dbReference>
<dbReference type="InterPro" id="IPR041587">
    <property type="entry name" value="Cry_V"/>
</dbReference>
<dbReference type="InterPro" id="IPR008979">
    <property type="entry name" value="Galactose-bd-like_sf"/>
</dbReference>
<dbReference type="InterPro" id="IPR038979">
    <property type="entry name" value="Pest_crys"/>
</dbReference>
<dbReference type="InterPro" id="IPR005638">
    <property type="entry name" value="Pest_crys_dom-III"/>
</dbReference>
<dbReference type="InterPro" id="IPR005639">
    <property type="entry name" value="Pest_crys_dom_I"/>
</dbReference>
<dbReference type="InterPro" id="IPR036716">
    <property type="entry name" value="Pest_crys_N_sf"/>
</dbReference>
<dbReference type="InterPro" id="IPR036399">
    <property type="entry name" value="Pest_cryst_cen_dom_sf"/>
</dbReference>
<dbReference type="InterPro" id="IPR001178">
    <property type="entry name" value="Pest_cryst_dom_II"/>
</dbReference>
<dbReference type="PANTHER" id="PTHR37003">
    <property type="entry name" value="ENDOTOXIN_N DOMAIN-CONTAINING PROTEIN-RELATED"/>
    <property type="match status" value="1"/>
</dbReference>
<dbReference type="PANTHER" id="PTHR37003:SF2">
    <property type="entry name" value="PESTICIDAL CRYSTAL PROTEIN N-TERMINAL DOMAIN-CONTAINING PROTEIN"/>
    <property type="match status" value="1"/>
</dbReference>
<dbReference type="Pfam" id="PF17997">
    <property type="entry name" value="Cry1Ac_D5"/>
    <property type="match status" value="1"/>
</dbReference>
<dbReference type="Pfam" id="PF21463">
    <property type="entry name" value="Cry1Ac_dom-VII"/>
    <property type="match status" value="1"/>
</dbReference>
<dbReference type="Pfam" id="PF03944">
    <property type="entry name" value="Endotoxin_C"/>
    <property type="match status" value="1"/>
</dbReference>
<dbReference type="Pfam" id="PF00555">
    <property type="entry name" value="Endotoxin_M"/>
    <property type="match status" value="1"/>
</dbReference>
<dbReference type="Pfam" id="PF03945">
    <property type="entry name" value="Endotoxin_N"/>
    <property type="match status" value="1"/>
</dbReference>
<dbReference type="SUPFAM" id="SSF51096">
    <property type="entry name" value="delta-Endotoxin (insectocide), middle domain"/>
    <property type="match status" value="1"/>
</dbReference>
<dbReference type="SUPFAM" id="SSF56849">
    <property type="entry name" value="delta-Endotoxin (insectocide), N-terminal domain"/>
    <property type="match status" value="1"/>
</dbReference>
<dbReference type="SUPFAM" id="SSF49785">
    <property type="entry name" value="Galactose-binding domain-like"/>
    <property type="match status" value="1"/>
</dbReference>
<keyword id="KW-0749">Sporulation</keyword>
<keyword id="KW-0800">Toxin</keyword>
<keyword id="KW-0843">Virulence</keyword>
<name>CR1BC_BACTM</name>
<gene>
    <name type="primary">cry1Bc</name>
    <name type="synonym">cryIB(c)</name>
    <name type="synonym">cryIBc</name>
</gene>
<sequence length="1233" mass="140452">MTSNRKNENEIINALSIPTVSNPSTQMNLSPDARIEDSLCVAEVNNIDPFVSASTVQTGINIAGRILGVLGVPFAGQLASFYSFLVGELWPSGRDPWEIFLEHVEQLIRQQVTENTRNTAIARLEGLGRGYRSYQQALETWLDNRNDARSRSIILERYVALELDITTAIPLFRIRNEEVPLLMVYAQAANLHLLLLRDASLFGSEWGMASSDVNQYYQEQIRYTEEYSNHCVQWYNTGLNNLRGTNAESWLRYNQFRRDLTLGVLDLVALFPSYDTRTYPINTSAQLTREIYTDPIGRTNAPSGFASTNWFNNNAPSFSAIEAAIFRPPHLLDFPEQLTIYSASSRWSSTQHMNYWVGHRLNFRPIGGTLNTSTQGLTNNTSINPVTLQFTSRDVYRTESNAGTNILFTTPVNGVPWARFNFINPQNIYERGATTYSQPYQGVGIQLFDSETELPPETTERPNYESYSHRLSHIGLIIGNTLRAPVYSWTHRSADRTNTIGPNRITQIPLVKALNLHSGVTVVGGPGFTGGDILRRTNTGTFGDIRLNINVPLSQRYRVRIRYASTTDLQFFTRINGTTVNIGNFSRTMNRGDNLEYRSFRTAGFSTPFNFLNAQSTFTLGAQSFSNQEVYIDRVEFVPAEVTFEAEYDLERAQKAVNALFTSTNPRRLKTDVTDYHIDQVSNMVACLSDEFCLDEKRELFEKVKYAKRLSDERNLLQDPNFTFISGQLSFASIDGQSNFPSINELSEHGWWGSANVTIQEGNDVFKENYVTLPGTFNECYPNYLYQKIGESELKAYTRYQLRGYIENSQDLEIYLIRYNAKHEAINVPGTESIWSISAESTIGKCTEPNRCAPHYEWNPDLDCSCRDGEKCAHHSHHSTLDIDVGCTDLHENLGVWLIFKIKTQDGHARLGNLEYLEEKPLLGEALRRVKRTEKKWRDKREKLHLETKRVYTEAKESVDALFVDSQYDRLQANSNIGMIHAADKLVHSIREAYLSELPVIRGVNADIFEELEGHILTAFSLYDARNAVKNGDFNNGLTCWNVKGHVDVQQSHHRFDLVVPEWKAEVSQAVRVCPGCGYILRVTAYKEGYGEGCVTIHEIEENTDELNFKNRVEEEIYPPDTGTCKYYTENQGTRTCGNECGSRNEGYDNAYEINAKSSLEYRPTYEEETYTDVRRENHCEYARGYINYSPVPAGYVTKELEYFPETDTVWIEIGETEGKFIVDSVELLLMEE</sequence>
<comment type="function">
    <text>Promotes colloidosmotic lysis by binding to the midgut epithelial cells of insects.</text>
</comment>
<comment type="developmental stage">
    <text>The crystal protein is produced during sporulation and is accumulated both as an inclusion and as part of the spore coat.</text>
</comment>
<comment type="miscellaneous">
    <text>Toxic segment of the protein is located in the N-terminus.</text>
</comment>
<comment type="similarity">
    <text evidence="1">Belongs to the delta endotoxin family.</text>
</comment>
<organism>
    <name type="scientific">Bacillus thuringiensis subsp. morrisoni</name>
    <dbReference type="NCBI Taxonomy" id="1441"/>
    <lineage>
        <taxon>Bacteria</taxon>
        <taxon>Bacillati</taxon>
        <taxon>Bacillota</taxon>
        <taxon>Bacilli</taxon>
        <taxon>Bacillales</taxon>
        <taxon>Bacillaceae</taxon>
        <taxon>Bacillus</taxon>
        <taxon>Bacillus cereus group</taxon>
    </lineage>
</organism>
<feature type="chain" id="PRO_0000174032" description="Pesticidal crystal protein Cry1Bc">
    <location>
        <begin position="1"/>
        <end position="1233"/>
    </location>
</feature>
<proteinExistence type="evidence at transcript level"/>
<evidence type="ECO:0000305" key="1"/>